<comment type="function">
    <text evidence="1 5">Component of the histone chaperone network (PubMed:22195965). Binds and stabilizes histone H3-H4 not bound to chromatin to maintain a soluble reservoir and modulate degradation by chaperone-mediated autophagy (PubMed:22195965). Required for DNA replication, normal cell cycle progression and cell proliferation. Forms a cytoplasmic complex with HSP90 and H1 linker histones and stimulates HSP90 ATPase activity. NASP and H1 histone are subsequently released from the complex and translocate to the nucleus where the histone is released for binding to DNA.</text>
</comment>
<comment type="function">
    <molecule>Isoform 1</molecule>
    <text evidence="5">Stabilizes soluble histone H3-H4.</text>
</comment>
<comment type="function">
    <molecule>Isoform 2</molecule>
    <text evidence="5">Stabilizes soluble histone H3-H4.</text>
</comment>
<comment type="subunit">
    <text evidence="1 5 6 7 8">Binds to linker H1 histones (By similarity). Interacts with histones H2A, H2B, H3 and H4 (PubMed:27618665, PubMed:8724350). Interacts with histone H3.3 (PubMed:33857403). Interacts with histones H3 and H4; NASP is a histone chaperone that stabilizes and maintains a soluble pool of histone H3-H4 dimers (PubMed:22195965). Interacts with ASF1A and ASF1B; the interaction is probably indirect and mediated by H3-H4 (PubMed:22195965). Also binds to HSP90 in the cytoplasm; this interaction stimulates binding of NASP to H1-6/H1T (By similarity).</text>
</comment>
<comment type="interaction">
    <interactant intactId="EBI-716205">
        <id>P49321</id>
    </interactant>
    <interactant intactId="EBI-79722">
        <id>P68431</id>
        <label>H3C12</label>
    </interactant>
    <organismsDiffer>false</organismsDiffer>
    <experiments>10</experiments>
</comment>
<comment type="interaction">
    <interactant intactId="EBI-716205">
        <id>P49321</id>
    </interactant>
    <interactant intactId="EBI-750109">
        <id>Q9NYB0</id>
        <label>TERF2IP</label>
    </interactant>
    <organismsDiffer>false</organismsDiffer>
    <experiments>2</experiments>
</comment>
<comment type="interaction">
    <interactant intactId="EBI-7038920">
        <id>P49321-2</id>
    </interactant>
    <interactant intactId="EBI-749553">
        <id>Q9Y294</id>
        <label>ASF1A</label>
    </interactant>
    <organismsDiffer>false</organismsDiffer>
    <experiments>3</experiments>
</comment>
<comment type="interaction">
    <interactant intactId="EBI-7038920">
        <id>P49321-2</id>
    </interactant>
    <interactant intactId="EBI-120658">
        <id>P84243</id>
        <label>H3-3B</label>
    </interactant>
    <organismsDiffer>false</organismsDiffer>
    <experiments>3</experiments>
</comment>
<comment type="interaction">
    <interactant intactId="EBI-7038920">
        <id>P49321-2</id>
    </interactant>
    <interactant intactId="EBI-358900">
        <id>Q16695</id>
        <label>H3-4</label>
    </interactant>
    <organismsDiffer>false</organismsDiffer>
    <experiments>6</experiments>
</comment>
<comment type="interaction">
    <interactant intactId="EBI-7038920">
        <id>P49321-2</id>
    </interactant>
    <interactant intactId="EBI-2868501">
        <id>Q6NXT2</id>
        <label>H3-5</label>
    </interactant>
    <organismsDiffer>false</organismsDiffer>
    <experiments>11</experiments>
</comment>
<comment type="interaction">
    <interactant intactId="EBI-7038920">
        <id>P49321-2</id>
    </interactant>
    <interactant intactId="EBI-79722">
        <id>P68431</id>
        <label>H3C12</label>
    </interactant>
    <organismsDiffer>false</organismsDiffer>
    <experiments>7</experiments>
</comment>
<comment type="interaction">
    <interactant intactId="EBI-7038920">
        <id>P49321-2</id>
    </interactant>
    <interactant intactId="EBI-750650">
        <id>Q71DI3</id>
        <label>H3C15</label>
    </interactant>
    <organismsDiffer>false</organismsDiffer>
    <experiments>4</experiments>
</comment>
<comment type="subcellular location">
    <subcellularLocation>
        <location evidence="1">Cytoplasm</location>
    </subcellularLocation>
    <subcellularLocation>
        <location evidence="1">Nucleus</location>
    </subcellularLocation>
</comment>
<comment type="alternative products">
    <event type="alternative splicing"/>
    <isoform>
        <id>P49321-1</id>
        <name>1</name>
        <name evidence="1">Testicular NASP</name>
        <name evidence="1 11">tNASP</name>
        <sequence type="displayed"/>
    </isoform>
    <isoform>
        <id>P49321-2</id>
        <name>2</name>
        <name evidence="1">Somatic NASP</name>
        <name evidence="1 11">sNASP</name>
        <sequence type="described" ref="VSP_006551"/>
    </isoform>
    <isoform>
        <id>P49321-3</id>
        <name>3</name>
        <sequence type="described" ref="VSP_036616"/>
    </isoform>
    <isoform>
        <id>P49321-4</id>
        <name>4</name>
        <sequence type="described" ref="VSP_047028"/>
    </isoform>
</comment>
<comment type="tissue specificity">
    <text>Isoform 1 is testis- and sperm-specific.</text>
</comment>
<comment type="similarity">
    <text evidence="12">Belongs to the NASP family.</text>
</comment>
<sequence>MAMESTATAAVAAELVSADKIEDVPAPSTSADKVESLDVDSEAKKLLGLGQKHLVMGDIPAAVNAFQEAASLLGKKYGETANECGEAFFFYGKSLLELARMENGVLGNALEGVHVEEEEGEKTEDESLVENNDNIDEEAREELREQVYDAMGEKEEAKKTEDKSLAKPETDKEQDSEMEKGGREDMDISKSAEEPQEKVDLTLDWLTETSEEAKGGAAPEGPNEAEVTSGKPEQEVPDAEEEKSVSGTDVQEECREKGGQEKQGEVIVSIEEKPKEVSEEQPVVTLEKQGTAVEVEAESLDPTVKPVDVGGDEPEEKVVTSENEAGKAVLEQLVGQEVPPAEESPEVTTEAAEASAVEAGSEVSEKPGQEAPVLPKDGAVNGPSVVGDQTPIEPQTSIERLTETKDGSGLEEKVRAKLVPSQEETKLSVEESEAAGDGVDTKVAQGATEKSPEDKVQIAANEETQEREEQMKEGEETEGSEEDDKENDKTEEMPNDSVLENKSLQENEEEEIGNLELAWDMLDLAKIIFKRQETKEAQLYAAQAHLKLGEVSVESENYVQAVEEFQSCLNLQEQYLEAHDRLLAETHYQLGLAYGYNSQYDEAVAQFSKSIEVIENRMAVLNEQVKEAEGSSAEYKKEIEELKELLPEIREKIEDAKESQRSGNVAELALKATLVESSTSGFTPGGGGSSVSMIASRKPTDGASSSNCVTDISHLVRKKRKPEEESPRKDDAKKAKQEPEVNGGSGDAVPSGNEVSENMEEEAENQAESRAAVEGTVEAGATVESTAC</sequence>
<feature type="initiator methionine" description="Removed" evidence="16 21">
    <location>
        <position position="1"/>
    </location>
</feature>
<feature type="chain" id="PRO_0000106299" description="Nuclear autoantigenic sperm protein">
    <location>
        <begin position="2"/>
        <end position="788"/>
    </location>
</feature>
<feature type="repeat" description="TPR 1" evidence="3">
    <location>
        <begin position="43"/>
        <end position="76"/>
    </location>
</feature>
<feature type="repeat" description="TPR 2" evidence="3">
    <location>
        <begin position="542"/>
        <end position="575"/>
    </location>
</feature>
<feature type="repeat" description="TPR 3" evidence="3">
    <location>
        <begin position="584"/>
        <end position="617"/>
    </location>
</feature>
<feature type="region of interest" description="Disordered" evidence="4">
    <location>
        <begin position="114"/>
        <end position="139"/>
    </location>
</feature>
<feature type="region of interest" description="Histone-binding" evidence="8">
    <location>
        <begin position="116"/>
        <end position="127"/>
    </location>
</feature>
<feature type="region of interest" description="Disordered" evidence="4">
    <location>
        <begin position="151"/>
        <end position="507"/>
    </location>
</feature>
<feature type="region of interest" description="Histone-binding" evidence="8">
    <location>
        <begin position="211"/>
        <end position="244"/>
    </location>
</feature>
<feature type="region of interest" description="Histone-binding" evidence="8">
    <location>
        <begin position="469"/>
        <end position="512"/>
    </location>
</feature>
<feature type="region of interest" description="Disordered" evidence="4">
    <location>
        <begin position="678"/>
        <end position="788"/>
    </location>
</feature>
<feature type="coiled-coil region" evidence="2">
    <location>
        <begin position="604"/>
        <end position="659"/>
    </location>
</feature>
<feature type="short sequence motif" description="Nuclear localization signal" evidence="2">
    <location>
        <begin position="716"/>
        <end position="722"/>
    </location>
</feature>
<feature type="compositionally biased region" description="Acidic residues" evidence="4">
    <location>
        <begin position="116"/>
        <end position="139"/>
    </location>
</feature>
<feature type="compositionally biased region" description="Basic and acidic residues" evidence="4">
    <location>
        <begin position="151"/>
        <end position="201"/>
    </location>
</feature>
<feature type="compositionally biased region" description="Basic and acidic residues" evidence="4">
    <location>
        <begin position="252"/>
        <end position="278"/>
    </location>
</feature>
<feature type="compositionally biased region" description="Low complexity" evidence="4">
    <location>
        <begin position="337"/>
        <end position="362"/>
    </location>
</feature>
<feature type="compositionally biased region" description="Basic and acidic residues" evidence="4">
    <location>
        <begin position="400"/>
        <end position="415"/>
    </location>
</feature>
<feature type="compositionally biased region" description="Acidic residues" evidence="4">
    <location>
        <begin position="475"/>
        <end position="485"/>
    </location>
</feature>
<feature type="compositionally biased region" description="Basic and acidic residues" evidence="4">
    <location>
        <begin position="721"/>
        <end position="739"/>
    </location>
</feature>
<feature type="modified residue" description="N-acetylalanine" evidence="16 21">
    <location>
        <position position="2"/>
    </location>
</feature>
<feature type="modified residue" description="N6-acetyllysine" evidence="17">
    <location>
        <position position="33"/>
    </location>
</feature>
<feature type="modified residue" description="Phosphothreonine" evidence="19 20">
    <location>
        <position position="123"/>
    </location>
</feature>
<feature type="modified residue" description="Phosphoserine" evidence="19 20">
    <location>
        <position position="127"/>
    </location>
</feature>
<feature type="modified residue" description="Phosphothreonine" evidence="22">
    <location>
        <position position="170"/>
    </location>
</feature>
<feature type="modified residue" description="Phosphoserine" evidence="22">
    <location>
        <position position="176"/>
    </location>
</feature>
<feature type="modified residue" description="Phosphoserine" evidence="13 15 19 20 22">
    <location>
        <position position="189"/>
    </location>
</feature>
<feature type="modified residue" description="Phosphoserine" evidence="22">
    <location>
        <position position="191"/>
    </location>
</feature>
<feature type="modified residue" description="N6-acetyllysine" evidence="1">
    <location>
        <position position="243"/>
    </location>
</feature>
<feature type="modified residue" description="Phosphoserine" evidence="15 20 22">
    <location>
        <position position="244"/>
    </location>
</feature>
<feature type="modified residue" description="N6-acetyllysine" evidence="1">
    <location>
        <position position="288"/>
    </location>
</feature>
<feature type="modified residue" description="Phosphoserine" evidence="22">
    <location>
        <position position="299"/>
    </location>
</feature>
<feature type="modified residue" description="Phosphoserine" evidence="20">
    <location>
        <position position="321"/>
    </location>
</feature>
<feature type="modified residue" description="Phosphothreonine" evidence="15 20 22">
    <location>
        <position position="390"/>
    </location>
</feature>
<feature type="modified residue" description="Phosphoserine" evidence="22">
    <location>
        <position position="397"/>
    </location>
</feature>
<feature type="modified residue" description="Phosphoserine" evidence="15 20">
    <location>
        <position position="408"/>
    </location>
</feature>
<feature type="modified residue" description="Phosphoserine" evidence="20 22">
    <location>
        <position position="421"/>
    </location>
</feature>
<feature type="modified residue" description="Phosphoserine" evidence="13 19 20">
    <location>
        <position position="451"/>
    </location>
</feature>
<feature type="modified residue" description="Phosphothreonine" evidence="14 20 22">
    <location>
        <position position="464"/>
    </location>
</feature>
<feature type="modified residue" description="Phosphothreonine" evidence="20 22">
    <location>
        <position position="477"/>
    </location>
</feature>
<feature type="modified residue" description="Phosphoserine" evidence="20 22">
    <location>
        <position position="480"/>
    </location>
</feature>
<feature type="modified residue" description="Phosphothreonine" evidence="19 20 22">
    <location>
        <position position="490"/>
    </location>
</feature>
<feature type="modified residue" description="Phosphoserine" evidence="19 20 22">
    <location>
        <position position="497"/>
    </location>
</feature>
<feature type="modified residue" description="Phosphoserine" evidence="13 18 19 20 23">
    <location>
        <position position="503"/>
    </location>
</feature>
<feature type="modified residue" description="Phosphoserine" evidence="22">
    <location>
        <position position="662"/>
    </location>
</feature>
<feature type="modified residue" description="Phosphothreonine" evidence="15">
    <location>
        <position position="683"/>
    </location>
</feature>
<feature type="modified residue" description="Phosphoserine" evidence="22">
    <location>
        <position position="705"/>
    </location>
</feature>
<feature type="modified residue" description="Phosphoserine" evidence="22">
    <location>
        <position position="706"/>
    </location>
</feature>
<feature type="modified residue" description="Phosphoserine" evidence="13 20">
    <location>
        <position position="726"/>
    </location>
</feature>
<feature type="modified residue" description="Phosphoserine" evidence="22">
    <location>
        <position position="745"/>
    </location>
</feature>
<feature type="modified residue" description="Phosphoserine" evidence="20 22">
    <location>
        <position position="751"/>
    </location>
</feature>
<feature type="modified residue" description="Phosphoserine" evidence="22">
    <location>
        <position position="756"/>
    </location>
</feature>
<feature type="cross-link" description="Glycyl lysine isopeptide (Lys-Gly) (interchain with G-Cter in SUMO1)" evidence="24">
    <location>
        <position position="736"/>
    </location>
</feature>
<feature type="splice variant" id="VSP_036616" description="In isoform 3." evidence="9">
    <original>MAMESTATAAVAAELVSADKIEDVPAPSTSADKVES</original>
    <variation>MFLLLLHLQIKWRATINLLSVTEDGLHFVEYYLNRIIH</variation>
    <location>
        <begin position="1"/>
        <end position="36"/>
    </location>
</feature>
<feature type="splice variant" id="VSP_047028" description="In isoform 4." evidence="9">
    <location>
        <begin position="36"/>
        <end position="99"/>
    </location>
</feature>
<feature type="splice variant" id="VSP_006551" description="In isoform 2." evidence="10">
    <location>
        <begin position="138"/>
        <end position="476"/>
    </location>
</feature>
<feature type="sequence variant" id="VAR_052619" description="In dbSNP:rs34618000.">
    <original>V</original>
    <variation>G</variation>
    <location>
        <position position="620"/>
    </location>
</feature>
<feature type="sequence conflict" description="In Ref. 1; AAA36027." evidence="12" ref="1">
    <original>EL</original>
    <variation>DV</variation>
    <location>
        <begin position="14"/>
        <end position="15"/>
    </location>
</feature>
<feature type="sequence conflict" description="In Ref. 3; BAD96536." evidence="12" ref="3">
    <original>K</original>
    <variation>T</variation>
    <location>
        <position position="159"/>
    </location>
</feature>
<feature type="sequence conflict" description="In Ref. 2; BAG61005." evidence="12" ref="2">
    <original>R</original>
    <variation>G</variation>
    <location>
        <position position="183"/>
    </location>
</feature>
<feature type="sequence conflict" description="In Ref. 1; AAA36027." evidence="12" ref="1">
    <original>T</original>
    <variation>Q</variation>
    <location>
        <position position="348"/>
    </location>
</feature>
<feature type="sequence conflict" description="In Ref. 1; AAA36027." evidence="12" ref="1">
    <location>
        <position position="633"/>
    </location>
</feature>
<feature type="sequence conflict" description="In Ref. 1; AAA36027." evidence="12" ref="1">
    <original>AESR</original>
    <variation>LKRG</variation>
    <location>
        <begin position="767"/>
        <end position="770"/>
    </location>
</feature>
<feature type="sequence conflict" description="In Ref. 1; AAA36027." evidence="12" ref="1">
    <original>V</original>
    <variation>L</variation>
    <location>
        <position position="777"/>
    </location>
</feature>
<feature type="helix" evidence="26">
    <location>
        <begin position="514"/>
        <end position="531"/>
    </location>
</feature>
<feature type="helix" evidence="26">
    <location>
        <begin position="535"/>
        <end position="554"/>
    </location>
</feature>
<feature type="helix" evidence="26">
    <location>
        <begin position="558"/>
        <end position="573"/>
    </location>
</feature>
<feature type="helix" evidence="26">
    <location>
        <begin position="581"/>
        <end position="596"/>
    </location>
</feature>
<feature type="helix" evidence="26">
    <location>
        <begin position="600"/>
        <end position="620"/>
    </location>
</feature>
<feature type="helix" evidence="26">
    <location>
        <begin position="638"/>
        <end position="656"/>
    </location>
</feature>
<feature type="helix" evidence="25">
    <location>
        <begin position="666"/>
        <end position="669"/>
    </location>
</feature>
<feature type="modified residue" description="Phosphothreonine" evidence="19 20">
    <location sequence="P49321-2">
        <position position="138"/>
    </location>
</feature>
<feature type="modified residue" description="Phosphoserine" evidence="13 19 20">
    <location sequence="P49321-2">
        <position position="141"/>
    </location>
</feature>
<accession>P49321</accession>
<accession>A8K6H2</accession>
<accession>B4DQP3</accession>
<accession>D3DQ07</accession>
<accession>F5H3J2</accession>
<accession>Q53GW5</accession>
<accession>Q5T622</accession>
<accession>Q5T625</accession>
<accession>Q96A69</accession>
<accession>Q9BTW2</accession>
<name>NASP_HUMAN</name>
<evidence type="ECO:0000250" key="1">
    <source>
        <dbReference type="UniProtKB" id="Q99MD9"/>
    </source>
</evidence>
<evidence type="ECO:0000255" key="2"/>
<evidence type="ECO:0000255" key="3">
    <source>
        <dbReference type="PROSITE-ProRule" id="PRU00339"/>
    </source>
</evidence>
<evidence type="ECO:0000256" key="4">
    <source>
        <dbReference type="SAM" id="MobiDB-lite"/>
    </source>
</evidence>
<evidence type="ECO:0000269" key="5">
    <source>
    </source>
</evidence>
<evidence type="ECO:0000269" key="6">
    <source>
    </source>
</evidence>
<evidence type="ECO:0000269" key="7">
    <source>
    </source>
</evidence>
<evidence type="ECO:0000269" key="8">
    <source>
    </source>
</evidence>
<evidence type="ECO:0000303" key="9">
    <source>
    </source>
</evidence>
<evidence type="ECO:0000303" key="10">
    <source>
    </source>
</evidence>
<evidence type="ECO:0000303" key="11">
    <source>
    </source>
</evidence>
<evidence type="ECO:0000305" key="12"/>
<evidence type="ECO:0007744" key="13">
    <source>
    </source>
</evidence>
<evidence type="ECO:0007744" key="14">
    <source>
    </source>
</evidence>
<evidence type="ECO:0007744" key="15">
    <source>
    </source>
</evidence>
<evidence type="ECO:0007744" key="16">
    <source>
    </source>
</evidence>
<evidence type="ECO:0007744" key="17">
    <source>
    </source>
</evidence>
<evidence type="ECO:0007744" key="18">
    <source>
    </source>
</evidence>
<evidence type="ECO:0007744" key="19">
    <source>
    </source>
</evidence>
<evidence type="ECO:0007744" key="20">
    <source>
    </source>
</evidence>
<evidence type="ECO:0007744" key="21">
    <source>
    </source>
</evidence>
<evidence type="ECO:0007744" key="22">
    <source>
    </source>
</evidence>
<evidence type="ECO:0007744" key="23">
    <source>
    </source>
</evidence>
<evidence type="ECO:0007744" key="24">
    <source>
    </source>
</evidence>
<evidence type="ECO:0007829" key="25">
    <source>
        <dbReference type="PDB" id="7V1L"/>
    </source>
</evidence>
<evidence type="ECO:0007829" key="26">
    <source>
        <dbReference type="PDB" id="7V1M"/>
    </source>
</evidence>
<reference key="1">
    <citation type="journal article" date="1992" name="Dev. Biol.">
        <title>Sequence and localization of human NASP: conservation of a Xenopus histone-binding protein.</title>
        <authorList>
            <person name="O'Rand M.G."/>
            <person name="Richardson R.T."/>
            <person name="Zimmerman L.J."/>
            <person name="Widgren E.E."/>
        </authorList>
    </citation>
    <scope>NUCLEOTIDE SEQUENCE [MRNA] (ISOFORM 1)</scope>
    <source>
        <tissue>Testis</tissue>
    </source>
</reference>
<reference key="2">
    <citation type="journal article" date="2004" name="Nat. Genet.">
        <title>Complete sequencing and characterization of 21,243 full-length human cDNAs.</title>
        <authorList>
            <person name="Ota T."/>
            <person name="Suzuki Y."/>
            <person name="Nishikawa T."/>
            <person name="Otsuki T."/>
            <person name="Sugiyama T."/>
            <person name="Irie R."/>
            <person name="Wakamatsu A."/>
            <person name="Hayashi K."/>
            <person name="Sato H."/>
            <person name="Nagai K."/>
            <person name="Kimura K."/>
            <person name="Makita H."/>
            <person name="Sekine M."/>
            <person name="Obayashi M."/>
            <person name="Nishi T."/>
            <person name="Shibahara T."/>
            <person name="Tanaka T."/>
            <person name="Ishii S."/>
            <person name="Yamamoto J."/>
            <person name="Saito K."/>
            <person name="Kawai Y."/>
            <person name="Isono Y."/>
            <person name="Nakamura Y."/>
            <person name="Nagahari K."/>
            <person name="Murakami K."/>
            <person name="Yasuda T."/>
            <person name="Iwayanagi T."/>
            <person name="Wagatsuma M."/>
            <person name="Shiratori A."/>
            <person name="Sudo H."/>
            <person name="Hosoiri T."/>
            <person name="Kaku Y."/>
            <person name="Kodaira H."/>
            <person name="Kondo H."/>
            <person name="Sugawara M."/>
            <person name="Takahashi M."/>
            <person name="Kanda K."/>
            <person name="Yokoi T."/>
            <person name="Furuya T."/>
            <person name="Kikkawa E."/>
            <person name="Omura Y."/>
            <person name="Abe K."/>
            <person name="Kamihara K."/>
            <person name="Katsuta N."/>
            <person name="Sato K."/>
            <person name="Tanikawa M."/>
            <person name="Yamazaki M."/>
            <person name="Ninomiya K."/>
            <person name="Ishibashi T."/>
            <person name="Yamashita H."/>
            <person name="Murakawa K."/>
            <person name="Fujimori K."/>
            <person name="Tanai H."/>
            <person name="Kimata M."/>
            <person name="Watanabe M."/>
            <person name="Hiraoka S."/>
            <person name="Chiba Y."/>
            <person name="Ishida S."/>
            <person name="Ono Y."/>
            <person name="Takiguchi S."/>
            <person name="Watanabe S."/>
            <person name="Yosida M."/>
            <person name="Hotuta T."/>
            <person name="Kusano J."/>
            <person name="Kanehori K."/>
            <person name="Takahashi-Fujii A."/>
            <person name="Hara H."/>
            <person name="Tanase T.-O."/>
            <person name="Nomura Y."/>
            <person name="Togiya S."/>
            <person name="Komai F."/>
            <person name="Hara R."/>
            <person name="Takeuchi K."/>
            <person name="Arita M."/>
            <person name="Imose N."/>
            <person name="Musashino K."/>
            <person name="Yuuki H."/>
            <person name="Oshima A."/>
            <person name="Sasaki N."/>
            <person name="Aotsuka S."/>
            <person name="Yoshikawa Y."/>
            <person name="Matsunawa H."/>
            <person name="Ichihara T."/>
            <person name="Shiohata N."/>
            <person name="Sano S."/>
            <person name="Moriya S."/>
            <person name="Momiyama H."/>
            <person name="Satoh N."/>
            <person name="Takami S."/>
            <person name="Terashima Y."/>
            <person name="Suzuki O."/>
            <person name="Nakagawa S."/>
            <person name="Senoh A."/>
            <person name="Mizoguchi H."/>
            <person name="Goto Y."/>
            <person name="Shimizu F."/>
            <person name="Wakebe H."/>
            <person name="Hishigaki H."/>
            <person name="Watanabe T."/>
            <person name="Sugiyama A."/>
            <person name="Takemoto M."/>
            <person name="Kawakami B."/>
            <person name="Yamazaki M."/>
            <person name="Watanabe K."/>
            <person name="Kumagai A."/>
            <person name="Itakura S."/>
            <person name="Fukuzumi Y."/>
            <person name="Fujimori Y."/>
            <person name="Komiyama M."/>
            <person name="Tashiro H."/>
            <person name="Tanigami A."/>
            <person name="Fujiwara T."/>
            <person name="Ono T."/>
            <person name="Yamada K."/>
            <person name="Fujii Y."/>
            <person name="Ozaki K."/>
            <person name="Hirao M."/>
            <person name="Ohmori Y."/>
            <person name="Kawabata A."/>
            <person name="Hikiji T."/>
            <person name="Kobatake N."/>
            <person name="Inagaki H."/>
            <person name="Ikema Y."/>
            <person name="Okamoto S."/>
            <person name="Okitani R."/>
            <person name="Kawakami T."/>
            <person name="Noguchi S."/>
            <person name="Itoh T."/>
            <person name="Shigeta K."/>
            <person name="Senba T."/>
            <person name="Matsumura K."/>
            <person name="Nakajima Y."/>
            <person name="Mizuno T."/>
            <person name="Morinaga M."/>
            <person name="Sasaki M."/>
            <person name="Togashi T."/>
            <person name="Oyama M."/>
            <person name="Hata H."/>
            <person name="Watanabe M."/>
            <person name="Komatsu T."/>
            <person name="Mizushima-Sugano J."/>
            <person name="Satoh T."/>
            <person name="Shirai Y."/>
            <person name="Takahashi Y."/>
            <person name="Nakagawa K."/>
            <person name="Okumura K."/>
            <person name="Nagase T."/>
            <person name="Nomura N."/>
            <person name="Kikuchi H."/>
            <person name="Masuho Y."/>
            <person name="Yamashita R."/>
            <person name="Nakai K."/>
            <person name="Yada T."/>
            <person name="Nakamura Y."/>
            <person name="Ohara O."/>
            <person name="Isogai T."/>
            <person name="Sugano S."/>
        </authorList>
    </citation>
    <scope>NUCLEOTIDE SEQUENCE [LARGE SCALE MRNA] (ISOFORMS 1 AND 4)</scope>
    <scope>NUCLEOTIDE SEQUENCE [LARGE SCALE MRNA] OF 1-635 (ISOFORM 3)</scope>
    <source>
        <tissue>Placenta</tissue>
        <tissue>Teratocarcinoma</tissue>
    </source>
</reference>
<reference key="3">
    <citation type="submission" date="2005-04" db="EMBL/GenBank/DDBJ databases">
        <authorList>
            <person name="Suzuki Y."/>
            <person name="Sugano S."/>
            <person name="Totoki Y."/>
            <person name="Toyoda A."/>
            <person name="Takeda T."/>
            <person name="Sakaki Y."/>
            <person name="Tanaka A."/>
            <person name="Yokoyama S."/>
        </authorList>
    </citation>
    <scope>NUCLEOTIDE SEQUENCE [LARGE SCALE MRNA] (ISOFORM 1)</scope>
    <source>
        <tissue>Liver</tissue>
    </source>
</reference>
<reference key="4">
    <citation type="journal article" date="2006" name="Nature">
        <title>The DNA sequence and biological annotation of human chromosome 1.</title>
        <authorList>
            <person name="Gregory S.G."/>
            <person name="Barlow K.F."/>
            <person name="McLay K.E."/>
            <person name="Kaul R."/>
            <person name="Swarbreck D."/>
            <person name="Dunham A."/>
            <person name="Scott C.E."/>
            <person name="Howe K.L."/>
            <person name="Woodfine K."/>
            <person name="Spencer C.C.A."/>
            <person name="Jones M.C."/>
            <person name="Gillson C."/>
            <person name="Searle S."/>
            <person name="Zhou Y."/>
            <person name="Kokocinski F."/>
            <person name="McDonald L."/>
            <person name="Evans R."/>
            <person name="Phillips K."/>
            <person name="Atkinson A."/>
            <person name="Cooper R."/>
            <person name="Jones C."/>
            <person name="Hall R.E."/>
            <person name="Andrews T.D."/>
            <person name="Lloyd C."/>
            <person name="Ainscough R."/>
            <person name="Almeida J.P."/>
            <person name="Ambrose K.D."/>
            <person name="Anderson F."/>
            <person name="Andrew R.W."/>
            <person name="Ashwell R.I.S."/>
            <person name="Aubin K."/>
            <person name="Babbage A.K."/>
            <person name="Bagguley C.L."/>
            <person name="Bailey J."/>
            <person name="Beasley H."/>
            <person name="Bethel G."/>
            <person name="Bird C.P."/>
            <person name="Bray-Allen S."/>
            <person name="Brown J.Y."/>
            <person name="Brown A.J."/>
            <person name="Buckley D."/>
            <person name="Burton J."/>
            <person name="Bye J."/>
            <person name="Carder C."/>
            <person name="Chapman J.C."/>
            <person name="Clark S.Y."/>
            <person name="Clarke G."/>
            <person name="Clee C."/>
            <person name="Cobley V."/>
            <person name="Collier R.E."/>
            <person name="Corby N."/>
            <person name="Coville G.J."/>
            <person name="Davies J."/>
            <person name="Deadman R."/>
            <person name="Dunn M."/>
            <person name="Earthrowl M."/>
            <person name="Ellington A.G."/>
            <person name="Errington H."/>
            <person name="Frankish A."/>
            <person name="Frankland J."/>
            <person name="French L."/>
            <person name="Garner P."/>
            <person name="Garnett J."/>
            <person name="Gay L."/>
            <person name="Ghori M.R.J."/>
            <person name="Gibson R."/>
            <person name="Gilby L.M."/>
            <person name="Gillett W."/>
            <person name="Glithero R.J."/>
            <person name="Grafham D.V."/>
            <person name="Griffiths C."/>
            <person name="Griffiths-Jones S."/>
            <person name="Grocock R."/>
            <person name="Hammond S."/>
            <person name="Harrison E.S.I."/>
            <person name="Hart E."/>
            <person name="Haugen E."/>
            <person name="Heath P.D."/>
            <person name="Holmes S."/>
            <person name="Holt K."/>
            <person name="Howden P.J."/>
            <person name="Hunt A.R."/>
            <person name="Hunt S.E."/>
            <person name="Hunter G."/>
            <person name="Isherwood J."/>
            <person name="James R."/>
            <person name="Johnson C."/>
            <person name="Johnson D."/>
            <person name="Joy A."/>
            <person name="Kay M."/>
            <person name="Kershaw J.K."/>
            <person name="Kibukawa M."/>
            <person name="Kimberley A.M."/>
            <person name="King A."/>
            <person name="Knights A.J."/>
            <person name="Lad H."/>
            <person name="Laird G."/>
            <person name="Lawlor S."/>
            <person name="Leongamornlert D.A."/>
            <person name="Lloyd D.M."/>
            <person name="Loveland J."/>
            <person name="Lovell J."/>
            <person name="Lush M.J."/>
            <person name="Lyne R."/>
            <person name="Martin S."/>
            <person name="Mashreghi-Mohammadi M."/>
            <person name="Matthews L."/>
            <person name="Matthews N.S.W."/>
            <person name="McLaren S."/>
            <person name="Milne S."/>
            <person name="Mistry S."/>
            <person name="Moore M.J.F."/>
            <person name="Nickerson T."/>
            <person name="O'Dell C.N."/>
            <person name="Oliver K."/>
            <person name="Palmeiri A."/>
            <person name="Palmer S.A."/>
            <person name="Parker A."/>
            <person name="Patel D."/>
            <person name="Pearce A.V."/>
            <person name="Peck A.I."/>
            <person name="Pelan S."/>
            <person name="Phelps K."/>
            <person name="Phillimore B.J."/>
            <person name="Plumb R."/>
            <person name="Rajan J."/>
            <person name="Raymond C."/>
            <person name="Rouse G."/>
            <person name="Saenphimmachak C."/>
            <person name="Sehra H.K."/>
            <person name="Sheridan E."/>
            <person name="Shownkeen R."/>
            <person name="Sims S."/>
            <person name="Skuce C.D."/>
            <person name="Smith M."/>
            <person name="Steward C."/>
            <person name="Subramanian S."/>
            <person name="Sycamore N."/>
            <person name="Tracey A."/>
            <person name="Tromans A."/>
            <person name="Van Helmond Z."/>
            <person name="Wall M."/>
            <person name="Wallis J.M."/>
            <person name="White S."/>
            <person name="Whitehead S.L."/>
            <person name="Wilkinson J.E."/>
            <person name="Willey D.L."/>
            <person name="Williams H."/>
            <person name="Wilming L."/>
            <person name="Wray P.W."/>
            <person name="Wu Z."/>
            <person name="Coulson A."/>
            <person name="Vaudin M."/>
            <person name="Sulston J.E."/>
            <person name="Durbin R.M."/>
            <person name="Hubbard T."/>
            <person name="Wooster R."/>
            <person name="Dunham I."/>
            <person name="Carter N.P."/>
            <person name="McVean G."/>
            <person name="Ross M.T."/>
            <person name="Harrow J."/>
            <person name="Olson M.V."/>
            <person name="Beck S."/>
            <person name="Rogers J."/>
            <person name="Bentley D.R."/>
        </authorList>
    </citation>
    <scope>NUCLEOTIDE SEQUENCE [LARGE SCALE GENOMIC DNA]</scope>
</reference>
<reference key="5">
    <citation type="submission" date="2005-09" db="EMBL/GenBank/DDBJ databases">
        <authorList>
            <person name="Mural R.J."/>
            <person name="Istrail S."/>
            <person name="Sutton G.G."/>
            <person name="Florea L."/>
            <person name="Halpern A.L."/>
            <person name="Mobarry C.M."/>
            <person name="Lippert R."/>
            <person name="Walenz B."/>
            <person name="Shatkay H."/>
            <person name="Dew I."/>
            <person name="Miller J.R."/>
            <person name="Flanigan M.J."/>
            <person name="Edwards N.J."/>
            <person name="Bolanos R."/>
            <person name="Fasulo D."/>
            <person name="Halldorsson B.V."/>
            <person name="Hannenhalli S."/>
            <person name="Turner R."/>
            <person name="Yooseph S."/>
            <person name="Lu F."/>
            <person name="Nusskern D.R."/>
            <person name="Shue B.C."/>
            <person name="Zheng X.H."/>
            <person name="Zhong F."/>
            <person name="Delcher A.L."/>
            <person name="Huson D.H."/>
            <person name="Kravitz S.A."/>
            <person name="Mouchard L."/>
            <person name="Reinert K."/>
            <person name="Remington K.A."/>
            <person name="Clark A.G."/>
            <person name="Waterman M.S."/>
            <person name="Eichler E.E."/>
            <person name="Adams M.D."/>
            <person name="Hunkapiller M.W."/>
            <person name="Myers E.W."/>
            <person name="Venter J.C."/>
        </authorList>
    </citation>
    <scope>NUCLEOTIDE SEQUENCE [LARGE SCALE GENOMIC DNA]</scope>
</reference>
<reference key="6">
    <citation type="journal article" date="2004" name="Genome Res.">
        <title>The status, quality, and expansion of the NIH full-length cDNA project: the Mammalian Gene Collection (MGC).</title>
        <authorList>
            <consortium name="The MGC Project Team"/>
        </authorList>
    </citation>
    <scope>NUCLEOTIDE SEQUENCE [LARGE SCALE MRNA] (ISOFORMS 1 AND 2)</scope>
    <source>
        <tissue>Eye</tissue>
        <tissue>Lung</tissue>
        <tissue>Placenta</tissue>
        <tissue>Testis</tissue>
    </source>
</reference>
<reference key="7">
    <citation type="journal article" date="1996" name="Biol. Reprod.">
        <title>Histone-binding domains in a human nuclear autoantigenic sperm protein.</title>
        <authorList>
            <person name="Batova I."/>
            <person name="O'Rand M.G."/>
        </authorList>
    </citation>
    <scope>HISTONE-BINDING REGIONS</scope>
    <scope>SUBUNIT</scope>
    <scope>INTERACTION WITH HISTONES H2A; H2B; H3 AND H4</scope>
</reference>
<reference key="8">
    <citation type="journal article" date="2006" name="Cell">
        <title>Global, in vivo, and site-specific phosphorylation dynamics in signaling networks.</title>
        <authorList>
            <person name="Olsen J.V."/>
            <person name="Blagoev B."/>
            <person name="Gnad F."/>
            <person name="Macek B."/>
            <person name="Kumar C."/>
            <person name="Mortensen P."/>
            <person name="Mann M."/>
        </authorList>
    </citation>
    <scope>PHOSPHORYLATION [LARGE SCALE ANALYSIS] AT SER-189; SER-451; SER-503 AND SER-726</scope>
    <scope>PHOSPHORYLATION [LARGE SCALE ANALYSIS] AT SER-141 (ISOFORM 2)</scope>
    <scope>IDENTIFICATION BY MASS SPECTROMETRY [LARGE SCALE ANALYSIS]</scope>
    <source>
        <tissue>Cervix carcinoma</tissue>
    </source>
</reference>
<reference key="9">
    <citation type="journal article" date="2006" name="Nat. Biotechnol.">
        <title>A probability-based approach for high-throughput protein phosphorylation analysis and site localization.</title>
        <authorList>
            <person name="Beausoleil S.A."/>
            <person name="Villen J."/>
            <person name="Gerber S.A."/>
            <person name="Rush J."/>
            <person name="Gygi S.P."/>
        </authorList>
    </citation>
    <scope>IDENTIFICATION BY MASS SPECTROMETRY [LARGE SCALE ANALYSIS]</scope>
    <source>
        <tissue>Cervix carcinoma</tissue>
    </source>
</reference>
<reference key="10">
    <citation type="journal article" date="2007" name="Science">
        <title>ATM and ATR substrate analysis reveals extensive protein networks responsive to DNA damage.</title>
        <authorList>
            <person name="Matsuoka S."/>
            <person name="Ballif B.A."/>
            <person name="Smogorzewska A."/>
            <person name="McDonald E.R. III"/>
            <person name="Hurov K.E."/>
            <person name="Luo J."/>
            <person name="Bakalarski C.E."/>
            <person name="Zhao Z."/>
            <person name="Solimini N."/>
            <person name="Lerenthal Y."/>
            <person name="Shiloh Y."/>
            <person name="Gygi S.P."/>
            <person name="Elledge S.J."/>
        </authorList>
    </citation>
    <scope>PHOSPHORYLATION [LARGE SCALE ANALYSIS] AT THR-464</scope>
    <scope>IDENTIFICATION BY MASS SPECTROMETRY [LARGE SCALE ANALYSIS]</scope>
    <source>
        <tissue>Embryonic kidney</tissue>
    </source>
</reference>
<reference key="11">
    <citation type="journal article" date="2008" name="Proc. Natl. Acad. Sci. U.S.A.">
        <title>A quantitative atlas of mitotic phosphorylation.</title>
        <authorList>
            <person name="Dephoure N."/>
            <person name="Zhou C."/>
            <person name="Villen J."/>
            <person name="Beausoleil S.A."/>
            <person name="Bakalarski C.E."/>
            <person name="Elledge S.J."/>
            <person name="Gygi S.P."/>
        </authorList>
    </citation>
    <scope>PHOSPHORYLATION [LARGE SCALE ANALYSIS] AT SER-189; SER-244; THR-390; SER-408 AND THR-683</scope>
    <scope>IDENTIFICATION BY MASS SPECTROMETRY [LARGE SCALE ANALYSIS]</scope>
    <source>
        <tissue>Cervix carcinoma</tissue>
    </source>
</reference>
<reference key="12">
    <citation type="journal article" date="2009" name="Anal. Chem.">
        <title>Lys-N and trypsin cover complementary parts of the phosphoproteome in a refined SCX-based approach.</title>
        <authorList>
            <person name="Gauci S."/>
            <person name="Helbig A.O."/>
            <person name="Slijper M."/>
            <person name="Krijgsveld J."/>
            <person name="Heck A.J."/>
            <person name="Mohammed S."/>
        </authorList>
    </citation>
    <scope>ACETYLATION [LARGE SCALE ANALYSIS] AT ALA-2</scope>
    <scope>CLEAVAGE OF INITIATOR METHIONINE [LARGE SCALE ANALYSIS]</scope>
    <scope>IDENTIFICATION BY MASS SPECTROMETRY [LARGE SCALE ANALYSIS]</scope>
</reference>
<reference key="13">
    <citation type="journal article" date="2009" name="Sci. Signal.">
        <title>Quantitative phosphoproteomic analysis of T cell receptor signaling reveals system-wide modulation of protein-protein interactions.</title>
        <authorList>
            <person name="Mayya V."/>
            <person name="Lundgren D.H."/>
            <person name="Hwang S.-I."/>
            <person name="Rezaul K."/>
            <person name="Wu L."/>
            <person name="Eng J.K."/>
            <person name="Rodionov V."/>
            <person name="Han D.K."/>
        </authorList>
    </citation>
    <scope>PHOSPHORYLATION [LARGE SCALE ANALYSIS] AT SER-503</scope>
    <scope>IDENTIFICATION BY MASS SPECTROMETRY [LARGE SCALE ANALYSIS]</scope>
    <source>
        <tissue>Leukemic T-cell</tissue>
    </source>
</reference>
<reference key="14">
    <citation type="journal article" date="2009" name="Science">
        <title>Lysine acetylation targets protein complexes and co-regulates major cellular functions.</title>
        <authorList>
            <person name="Choudhary C."/>
            <person name="Kumar C."/>
            <person name="Gnad F."/>
            <person name="Nielsen M.L."/>
            <person name="Rehman M."/>
            <person name="Walther T.C."/>
            <person name="Olsen J.V."/>
            <person name="Mann M."/>
        </authorList>
    </citation>
    <scope>ACETYLATION [LARGE SCALE ANALYSIS] AT LYS-33</scope>
    <scope>IDENTIFICATION BY MASS SPECTROMETRY [LARGE SCALE ANALYSIS]</scope>
</reference>
<reference key="15">
    <citation type="journal article" date="2010" name="Sci. Signal.">
        <title>Quantitative phosphoproteomics reveals widespread full phosphorylation site occupancy during mitosis.</title>
        <authorList>
            <person name="Olsen J.V."/>
            <person name="Vermeulen M."/>
            <person name="Santamaria A."/>
            <person name="Kumar C."/>
            <person name="Miller M.L."/>
            <person name="Jensen L.J."/>
            <person name="Gnad F."/>
            <person name="Cox J."/>
            <person name="Jensen T.S."/>
            <person name="Nigg E.A."/>
            <person name="Brunak S."/>
            <person name="Mann M."/>
        </authorList>
    </citation>
    <scope>PHOSPHORYLATION [LARGE SCALE ANALYSIS] AT THR-123; SER-127; SER-189; SER-451; THR-490; SER-497 AND SER-503</scope>
    <scope>PHOSPHORYLATION [LARGE SCALE ANALYSIS] AT THR-138 AND SER-141 (ISOFORM 2)</scope>
    <scope>IDENTIFICATION BY MASS SPECTROMETRY [LARGE SCALE ANALYSIS]</scope>
    <source>
        <tissue>Cervix carcinoma</tissue>
    </source>
</reference>
<reference key="16">
    <citation type="journal article" date="2011" name="BMC Syst. Biol.">
        <title>Initial characterization of the human central proteome.</title>
        <authorList>
            <person name="Burkard T.R."/>
            <person name="Planyavsky M."/>
            <person name="Kaupe I."/>
            <person name="Breitwieser F.P."/>
            <person name="Buerckstuemmer T."/>
            <person name="Bennett K.L."/>
            <person name="Superti-Furga G."/>
            <person name="Colinge J."/>
        </authorList>
    </citation>
    <scope>IDENTIFICATION BY MASS SPECTROMETRY [LARGE SCALE ANALYSIS]</scope>
</reference>
<reference key="17">
    <citation type="journal article" date="2011" name="Mol. Cell">
        <title>A specific function for the histone chaperone NASP to fine-tune a reservoir of soluble H3-H4 in the histone supply chain.</title>
        <authorList>
            <person name="Cook A.J."/>
            <person name="Gurard-Levin Z.A."/>
            <person name="Vassias I."/>
            <person name="Almouzni G."/>
        </authorList>
    </citation>
    <scope>FUNCTION</scope>
    <scope>INTERACTION WITH ASF1A; ASF1B AND HISTONES H3 AND H4</scope>
</reference>
<reference key="18">
    <citation type="journal article" date="2011" name="Sci. Signal.">
        <title>System-wide temporal characterization of the proteome and phosphoproteome of human embryonic stem cell differentiation.</title>
        <authorList>
            <person name="Rigbolt K.T."/>
            <person name="Prokhorova T.A."/>
            <person name="Akimov V."/>
            <person name="Henningsen J."/>
            <person name="Johansen P.T."/>
            <person name="Kratchmarova I."/>
            <person name="Kassem M."/>
            <person name="Mann M."/>
            <person name="Olsen J.V."/>
            <person name="Blagoev B."/>
        </authorList>
    </citation>
    <scope>PHOSPHORYLATION [LARGE SCALE ANALYSIS] AT THR-123; SER-127; SER-189; SER-244; SER-321; THR-390; SER-408; SER-421; SER-451; THR-464; THR-477; SER-480; THR-490; SER-497; SER-503; SER-726 AND SER-751</scope>
    <scope>PHOSPHORYLATION [LARGE SCALE ANALYSIS] AT THR-138 AND SER-141 (ISOFORM 2)</scope>
    <scope>IDENTIFICATION BY MASS SPECTROMETRY [LARGE SCALE ANALYSIS]</scope>
</reference>
<reference key="19">
    <citation type="journal article" date="2012" name="Mol. Cell. Proteomics">
        <title>Comparative large-scale characterisation of plant vs. mammal proteins reveals similar and idiosyncratic N-alpha acetylation features.</title>
        <authorList>
            <person name="Bienvenut W.V."/>
            <person name="Sumpton D."/>
            <person name="Martinez A."/>
            <person name="Lilla S."/>
            <person name="Espagne C."/>
            <person name="Meinnel T."/>
            <person name="Giglione C."/>
        </authorList>
    </citation>
    <scope>ACETYLATION [LARGE SCALE ANALYSIS] AT ALA-2</scope>
    <scope>CLEAVAGE OF INITIATOR METHIONINE [LARGE SCALE ANALYSIS]</scope>
    <scope>IDENTIFICATION BY MASS SPECTROMETRY [LARGE SCALE ANALYSIS]</scope>
</reference>
<reference key="20">
    <citation type="journal article" date="2013" name="J. Proteome Res.">
        <title>Toward a comprehensive characterization of a human cancer cell phosphoproteome.</title>
        <authorList>
            <person name="Zhou H."/>
            <person name="Di Palma S."/>
            <person name="Preisinger C."/>
            <person name="Peng M."/>
            <person name="Polat A.N."/>
            <person name="Heck A.J."/>
            <person name="Mohammed S."/>
        </authorList>
    </citation>
    <scope>PHOSPHORYLATION [LARGE SCALE ANALYSIS] AT THR-170; SER-176; SER-189; SER-191; SER-244; SER-299; THR-390; SER-397; SER-421; THR-464; THR-477; SER-480; THR-490; SER-497; SER-662; SER-705; SER-706; SER-745; SER-751 AND SER-756</scope>
    <scope>IDENTIFICATION BY MASS SPECTROMETRY [LARGE SCALE ANALYSIS]</scope>
    <source>
        <tissue>Cervix carcinoma</tissue>
        <tissue>Erythroleukemia</tissue>
    </source>
</reference>
<reference key="21">
    <citation type="journal article" date="2014" name="J. Proteomics">
        <title>An enzyme assisted RP-RPLC approach for in-depth analysis of human liver phosphoproteome.</title>
        <authorList>
            <person name="Bian Y."/>
            <person name="Song C."/>
            <person name="Cheng K."/>
            <person name="Dong M."/>
            <person name="Wang F."/>
            <person name="Huang J."/>
            <person name="Sun D."/>
            <person name="Wang L."/>
            <person name="Ye M."/>
            <person name="Zou H."/>
        </authorList>
    </citation>
    <scope>PHOSPHORYLATION [LARGE SCALE ANALYSIS] AT SER-503</scope>
    <scope>IDENTIFICATION BY MASS SPECTROMETRY [LARGE SCALE ANALYSIS]</scope>
    <source>
        <tissue>Liver</tissue>
    </source>
</reference>
<reference key="22">
    <citation type="journal article" date="2014" name="Proc. Natl. Acad. Sci. U.S.A.">
        <title>Mapping of SUMO sites and analysis of SUMOylation changes induced by external stimuli.</title>
        <authorList>
            <person name="Impens F."/>
            <person name="Radoshevich L."/>
            <person name="Cossart P."/>
            <person name="Ribet D."/>
        </authorList>
    </citation>
    <scope>SUMOYLATION [LARGE SCALE ANALYSIS] AT LYS-736</scope>
    <scope>IDENTIFICATION BY MASS SPECTROMETRY [LARGE SCALE ANALYSIS]</scope>
</reference>
<reference key="23">
    <citation type="journal article" date="2016" name="Structure">
        <title>Structural Insights into the Association of Hif1 with Histones H2A-H2B Dimer and H3-H4 Tetramer.</title>
        <authorList>
            <person name="Zhang M."/>
            <person name="Liu H."/>
            <person name="Gao Y."/>
            <person name="Zhu Z."/>
            <person name="Chen Z."/>
            <person name="Zheng P."/>
            <person name="Xue L."/>
            <person name="Li J."/>
            <person name="Teng M."/>
            <person name="Niu L."/>
        </authorList>
    </citation>
    <scope>SUBUNIT</scope>
    <scope>INTERACTION WITH HISTONES H2A; H2B; H3 AND H4</scope>
</reference>
<reference key="24">
    <citation type="journal article" date="2021" name="Mol. Cell">
        <title>DNAJC9 integrates heat shock molecular chaperones into the histone chaperone network.</title>
        <authorList>
            <person name="Hammond C.M."/>
            <person name="Bao H."/>
            <person name="Hendriks I.A."/>
            <person name="Carraro M."/>
            <person name="Garcia-Nieto A."/>
            <person name="Liu Y."/>
            <person name="Reveron-Gomez N."/>
            <person name="Spanos C."/>
            <person name="Chen L."/>
            <person name="Rappsilber J."/>
            <person name="Nielsen M.L."/>
            <person name="Patel D.J."/>
            <person name="Huang H."/>
            <person name="Groth A."/>
        </authorList>
    </citation>
    <scope>INTERACTION WITH HISTONE H3.3</scope>
</reference>
<dbReference type="EMBL" id="M97856">
    <property type="protein sequence ID" value="AAA36027.1"/>
    <property type="molecule type" value="mRNA"/>
</dbReference>
<dbReference type="EMBL" id="AK056161">
    <property type="status" value="NOT_ANNOTATED_CDS"/>
    <property type="molecule type" value="mRNA"/>
</dbReference>
<dbReference type="EMBL" id="AK291637">
    <property type="protein sequence ID" value="BAF84326.1"/>
    <property type="molecule type" value="mRNA"/>
</dbReference>
<dbReference type="EMBL" id="AK298893">
    <property type="protein sequence ID" value="BAG61005.1"/>
    <property type="molecule type" value="mRNA"/>
</dbReference>
<dbReference type="EMBL" id="AK222816">
    <property type="protein sequence ID" value="BAD96536.1"/>
    <property type="molecule type" value="mRNA"/>
</dbReference>
<dbReference type="EMBL" id="AL355480">
    <property type="status" value="NOT_ANNOTATED_CDS"/>
    <property type="molecule type" value="Genomic_DNA"/>
</dbReference>
<dbReference type="EMBL" id="CH471059">
    <property type="protein sequence ID" value="EAX06968.1"/>
    <property type="molecule type" value="Genomic_DNA"/>
</dbReference>
<dbReference type="EMBL" id="CH471059">
    <property type="protein sequence ID" value="EAX06969.1"/>
    <property type="molecule type" value="Genomic_DNA"/>
</dbReference>
<dbReference type="EMBL" id="BC003113">
    <property type="protein sequence ID" value="AAH03113.1"/>
    <property type="molecule type" value="mRNA"/>
</dbReference>
<dbReference type="EMBL" id="BC053608">
    <property type="protein sequence ID" value="AAH53608.1"/>
    <property type="molecule type" value="mRNA"/>
</dbReference>
<dbReference type="EMBL" id="BC010105">
    <property type="protein sequence ID" value="AAH10105.1"/>
    <property type="molecule type" value="mRNA"/>
</dbReference>
<dbReference type="EMBL" id="BC011580">
    <property type="protein sequence ID" value="AAH11580.1"/>
    <property type="molecule type" value="mRNA"/>
</dbReference>
<dbReference type="CCDS" id="CCDS524.1">
    <molecule id="P49321-1"/>
</dbReference>
<dbReference type="CCDS" id="CCDS525.1">
    <molecule id="P49321-2"/>
</dbReference>
<dbReference type="CCDS" id="CCDS55597.1">
    <molecule id="P49321-4"/>
</dbReference>
<dbReference type="PIR" id="A48819">
    <property type="entry name" value="A48819"/>
</dbReference>
<dbReference type="RefSeq" id="NP_001182122.1">
    <molecule id="P49321-4"/>
    <property type="nucleotide sequence ID" value="NM_001195193.2"/>
</dbReference>
<dbReference type="RefSeq" id="NP_002473.2">
    <molecule id="P49321-1"/>
    <property type="nucleotide sequence ID" value="NM_002482.3"/>
</dbReference>
<dbReference type="RefSeq" id="NP_689511.2">
    <molecule id="P49321-2"/>
    <property type="nucleotide sequence ID" value="NM_152298.3"/>
</dbReference>
<dbReference type="RefSeq" id="XP_005270945.1">
    <molecule id="P49321-3"/>
    <property type="nucleotide sequence ID" value="XM_005270888.4"/>
</dbReference>
<dbReference type="RefSeq" id="XP_054192721.1">
    <molecule id="P49321-3"/>
    <property type="nucleotide sequence ID" value="XM_054336746.1"/>
</dbReference>
<dbReference type="PDB" id="7V1K">
    <property type="method" value="X-ray"/>
    <property type="resolution" value="3.29 A"/>
    <property type="chains" value="A=499-679"/>
</dbReference>
<dbReference type="PDB" id="7V1L">
    <property type="method" value="X-ray"/>
    <property type="resolution" value="2.85 A"/>
    <property type="chains" value="B=499-679"/>
</dbReference>
<dbReference type="PDB" id="7V1M">
    <property type="method" value="X-ray"/>
    <property type="resolution" value="2.83 A"/>
    <property type="chains" value="G/H=499-662"/>
</dbReference>
<dbReference type="PDB" id="7V6P">
    <property type="method" value="X-ray"/>
    <property type="resolution" value="2.90 A"/>
    <property type="chains" value="A=454-659"/>
</dbReference>
<dbReference type="PDB" id="7V6Q">
    <property type="method" value="X-ray"/>
    <property type="resolution" value="3.00 A"/>
    <property type="chains" value="D/H=454-659"/>
</dbReference>
<dbReference type="PDBsum" id="7V1K"/>
<dbReference type="PDBsum" id="7V1L"/>
<dbReference type="PDBsum" id="7V1M"/>
<dbReference type="PDBsum" id="7V6P"/>
<dbReference type="PDBsum" id="7V6Q"/>
<dbReference type="SMR" id="P49321"/>
<dbReference type="BioGRID" id="110759">
    <property type="interactions" value="219"/>
</dbReference>
<dbReference type="CORUM" id="P49321"/>
<dbReference type="DIP" id="DIP-47269N"/>
<dbReference type="FunCoup" id="P49321">
    <property type="interactions" value="2779"/>
</dbReference>
<dbReference type="IntAct" id="P49321">
    <property type="interactions" value="73"/>
</dbReference>
<dbReference type="MINT" id="P49321"/>
<dbReference type="STRING" id="9606.ENSP00000255120"/>
<dbReference type="GlyCosmos" id="P49321">
    <property type="glycosylation" value="9 sites, 2 glycans"/>
</dbReference>
<dbReference type="GlyGen" id="P49321">
    <property type="glycosylation" value="16 sites, 2 O-linked glycans (16 sites)"/>
</dbReference>
<dbReference type="iPTMnet" id="P49321"/>
<dbReference type="MetOSite" id="P49321"/>
<dbReference type="PhosphoSitePlus" id="P49321"/>
<dbReference type="SwissPalm" id="P49321"/>
<dbReference type="BioMuta" id="NASP"/>
<dbReference type="DMDM" id="23503077"/>
<dbReference type="CPTAC" id="CPTAC-411"/>
<dbReference type="CPTAC" id="CPTAC-412"/>
<dbReference type="jPOST" id="P49321"/>
<dbReference type="MassIVE" id="P49321"/>
<dbReference type="PaxDb" id="9606-ENSP00000255120"/>
<dbReference type="PeptideAtlas" id="P49321"/>
<dbReference type="ProteomicsDB" id="26289"/>
<dbReference type="ProteomicsDB" id="55984">
    <molecule id="P49321-1"/>
</dbReference>
<dbReference type="ProteomicsDB" id="55985">
    <molecule id="P49321-2"/>
</dbReference>
<dbReference type="ProteomicsDB" id="55986">
    <molecule id="P49321-3"/>
</dbReference>
<dbReference type="Pumba" id="P49321"/>
<dbReference type="Antibodypedia" id="32662">
    <property type="antibodies" value="192 antibodies from 29 providers"/>
</dbReference>
<dbReference type="DNASU" id="4678"/>
<dbReference type="Ensembl" id="ENST00000350030.8">
    <molecule id="P49321-1"/>
    <property type="protein sequence ID" value="ENSP00000255120.5"/>
    <property type="gene ID" value="ENSG00000132780.17"/>
</dbReference>
<dbReference type="Ensembl" id="ENST00000351223.7">
    <molecule id="P49321-2"/>
    <property type="protein sequence ID" value="ENSP00000255121.4"/>
    <property type="gene ID" value="ENSG00000132780.17"/>
</dbReference>
<dbReference type="Ensembl" id="ENST00000537798.5">
    <molecule id="P49321-4"/>
    <property type="protein sequence ID" value="ENSP00000438871.1"/>
    <property type="gene ID" value="ENSG00000132780.17"/>
</dbReference>
<dbReference type="GeneID" id="4678"/>
<dbReference type="KEGG" id="hsa:4678"/>
<dbReference type="MANE-Select" id="ENST00000350030.8">
    <property type="protein sequence ID" value="ENSP00000255120.5"/>
    <property type="RefSeq nucleotide sequence ID" value="NM_002482.4"/>
    <property type="RefSeq protein sequence ID" value="NP_002473.2"/>
</dbReference>
<dbReference type="UCSC" id="uc001coi.3">
    <molecule id="P49321-1"/>
    <property type="organism name" value="human"/>
</dbReference>
<dbReference type="AGR" id="HGNC:7644"/>
<dbReference type="CTD" id="4678"/>
<dbReference type="DisGeNET" id="4678"/>
<dbReference type="GeneCards" id="NASP"/>
<dbReference type="HGNC" id="HGNC:7644">
    <property type="gene designation" value="NASP"/>
</dbReference>
<dbReference type="HPA" id="ENSG00000132780">
    <property type="expression patterns" value="Low tissue specificity"/>
</dbReference>
<dbReference type="MIM" id="603185">
    <property type="type" value="gene"/>
</dbReference>
<dbReference type="neXtProt" id="NX_P49321"/>
<dbReference type="OpenTargets" id="ENSG00000132780"/>
<dbReference type="PharmGKB" id="PA31448"/>
<dbReference type="VEuPathDB" id="HostDB:ENSG00000132780"/>
<dbReference type="eggNOG" id="KOG4563">
    <property type="taxonomic scope" value="Eukaryota"/>
</dbReference>
<dbReference type="GeneTree" id="ENSGT00390000016650"/>
<dbReference type="HOGENOM" id="CLU_010162_0_0_1"/>
<dbReference type="InParanoid" id="P49321"/>
<dbReference type="OMA" id="QIKWRXL"/>
<dbReference type="OrthoDB" id="5587616at2759"/>
<dbReference type="PAN-GO" id="P49321">
    <property type="GO annotations" value="4 GO annotations based on evolutionary models"/>
</dbReference>
<dbReference type="PhylomeDB" id="P49321"/>
<dbReference type="TreeFam" id="TF317297"/>
<dbReference type="PathwayCommons" id="P49321"/>
<dbReference type="SignaLink" id="P49321"/>
<dbReference type="SIGNOR" id="P49321"/>
<dbReference type="BioGRID-ORCS" id="4678">
    <property type="hits" value="311 hits in 1168 CRISPR screens"/>
</dbReference>
<dbReference type="ChiTaRS" id="NASP">
    <property type="organism name" value="human"/>
</dbReference>
<dbReference type="GeneWiki" id="NASP_(gene)"/>
<dbReference type="GenomeRNAi" id="4678"/>
<dbReference type="Pharos" id="P49321">
    <property type="development level" value="Tbio"/>
</dbReference>
<dbReference type="PRO" id="PR:P49321"/>
<dbReference type="Proteomes" id="UP000005640">
    <property type="component" value="Chromosome 1"/>
</dbReference>
<dbReference type="RNAct" id="P49321">
    <property type="molecule type" value="protein"/>
</dbReference>
<dbReference type="Bgee" id="ENSG00000132780">
    <property type="expression patterns" value="Expressed in ventricular zone and 212 other cell types or tissues"/>
</dbReference>
<dbReference type="ExpressionAtlas" id="P49321">
    <property type="expression patterns" value="baseline and differential"/>
</dbReference>
<dbReference type="GO" id="GO:0000785">
    <property type="term" value="C:chromatin"/>
    <property type="evidence" value="ECO:0000314"/>
    <property type="project" value="UniProtKB"/>
</dbReference>
<dbReference type="GO" id="GO:0005737">
    <property type="term" value="C:cytoplasm"/>
    <property type="evidence" value="ECO:0007669"/>
    <property type="project" value="UniProtKB-SubCell"/>
</dbReference>
<dbReference type="GO" id="GO:0005654">
    <property type="term" value="C:nucleoplasm"/>
    <property type="evidence" value="ECO:0000314"/>
    <property type="project" value="HPA"/>
</dbReference>
<dbReference type="GO" id="GO:0005634">
    <property type="term" value="C:nucleus"/>
    <property type="evidence" value="ECO:0000250"/>
    <property type="project" value="UniProtKB"/>
</dbReference>
<dbReference type="GO" id="GO:0032991">
    <property type="term" value="C:protein-containing complex"/>
    <property type="evidence" value="ECO:0000314"/>
    <property type="project" value="UniProtKB"/>
</dbReference>
<dbReference type="GO" id="GO:0042393">
    <property type="term" value="F:histone binding"/>
    <property type="evidence" value="ECO:0000314"/>
    <property type="project" value="UniProtKB"/>
</dbReference>
<dbReference type="GO" id="GO:0044877">
    <property type="term" value="F:protein-containing complex binding"/>
    <property type="evidence" value="ECO:0000314"/>
    <property type="project" value="UniProtKB"/>
</dbReference>
<dbReference type="GO" id="GO:0001824">
    <property type="term" value="P:blastocyst development"/>
    <property type="evidence" value="ECO:0000250"/>
    <property type="project" value="UniProtKB"/>
</dbReference>
<dbReference type="GO" id="GO:0034080">
    <property type="term" value="P:CENP-A containing chromatin assembly"/>
    <property type="evidence" value="ECO:0000318"/>
    <property type="project" value="GO_Central"/>
</dbReference>
<dbReference type="GO" id="GO:0006260">
    <property type="term" value="P:DNA replication"/>
    <property type="evidence" value="ECO:0007669"/>
    <property type="project" value="UniProtKB-KW"/>
</dbReference>
<dbReference type="GO" id="GO:0006335">
    <property type="term" value="P:DNA replication-dependent chromatin assembly"/>
    <property type="evidence" value="ECO:0000250"/>
    <property type="project" value="UniProtKB"/>
</dbReference>
<dbReference type="GO" id="GO:0008584">
    <property type="term" value="P:male gonad development"/>
    <property type="evidence" value="ECO:0007669"/>
    <property type="project" value="Ensembl"/>
</dbReference>
<dbReference type="GO" id="GO:0006334">
    <property type="term" value="P:nucleosome assembly"/>
    <property type="evidence" value="ECO:0000314"/>
    <property type="project" value="UniProtKB"/>
</dbReference>
<dbReference type="GO" id="GO:0015031">
    <property type="term" value="P:protein transport"/>
    <property type="evidence" value="ECO:0007669"/>
    <property type="project" value="UniProtKB-KW"/>
</dbReference>
<dbReference type="GO" id="GO:0033574">
    <property type="term" value="P:response to testosterone"/>
    <property type="evidence" value="ECO:0007669"/>
    <property type="project" value="Ensembl"/>
</dbReference>
<dbReference type="FunFam" id="1.25.40.10:FF:000087">
    <property type="entry name" value="Nuclear autoantigenic sperm protein (Histone-binding)"/>
    <property type="match status" value="1"/>
</dbReference>
<dbReference type="Gene3D" id="1.25.40.10">
    <property type="entry name" value="Tetratricopeptide repeat domain"/>
    <property type="match status" value="1"/>
</dbReference>
<dbReference type="InterPro" id="IPR051730">
    <property type="entry name" value="NASP-like"/>
</dbReference>
<dbReference type="InterPro" id="IPR019544">
    <property type="entry name" value="Tetratricopeptide_SHNi-TPR_dom"/>
</dbReference>
<dbReference type="InterPro" id="IPR011990">
    <property type="entry name" value="TPR-like_helical_dom_sf"/>
</dbReference>
<dbReference type="InterPro" id="IPR019734">
    <property type="entry name" value="TPR_rpt"/>
</dbReference>
<dbReference type="PANTHER" id="PTHR15081:SF1">
    <property type="entry name" value="NUCLEAR AUTOANTIGENIC SPERM PROTEIN"/>
    <property type="match status" value="1"/>
</dbReference>
<dbReference type="PANTHER" id="PTHR15081">
    <property type="entry name" value="NUCLEAR AUTOANTIGENIC SPERM PROTEIN NASP -RELATED"/>
    <property type="match status" value="1"/>
</dbReference>
<dbReference type="Pfam" id="PF10516">
    <property type="entry name" value="SHNi-TPR"/>
    <property type="match status" value="1"/>
</dbReference>
<dbReference type="Pfam" id="PF13181">
    <property type="entry name" value="TPR_8"/>
    <property type="match status" value="1"/>
</dbReference>
<dbReference type="SMART" id="SM00028">
    <property type="entry name" value="TPR"/>
    <property type="match status" value="3"/>
</dbReference>
<dbReference type="SUPFAM" id="SSF48452">
    <property type="entry name" value="TPR-like"/>
    <property type="match status" value="1"/>
</dbReference>
<dbReference type="PROSITE" id="PS50005">
    <property type="entry name" value="TPR"/>
    <property type="match status" value="3"/>
</dbReference>
<dbReference type="PROSITE" id="PS50293">
    <property type="entry name" value="TPR_REGION"/>
    <property type="match status" value="2"/>
</dbReference>
<gene>
    <name type="primary">NASP</name>
</gene>
<organism>
    <name type="scientific">Homo sapiens</name>
    <name type="common">Human</name>
    <dbReference type="NCBI Taxonomy" id="9606"/>
    <lineage>
        <taxon>Eukaryota</taxon>
        <taxon>Metazoa</taxon>
        <taxon>Chordata</taxon>
        <taxon>Craniata</taxon>
        <taxon>Vertebrata</taxon>
        <taxon>Euteleostomi</taxon>
        <taxon>Mammalia</taxon>
        <taxon>Eutheria</taxon>
        <taxon>Euarchontoglires</taxon>
        <taxon>Primates</taxon>
        <taxon>Haplorrhini</taxon>
        <taxon>Catarrhini</taxon>
        <taxon>Hominidae</taxon>
        <taxon>Homo</taxon>
    </lineage>
</organism>
<protein>
    <recommendedName>
        <fullName>Nuclear autoantigenic sperm protein</fullName>
        <shortName>NASP</shortName>
    </recommendedName>
</protein>
<keyword id="KW-0002">3D-structure</keyword>
<keyword id="KW-0007">Acetylation</keyword>
<keyword id="KW-0025">Alternative splicing</keyword>
<keyword id="KW-0131">Cell cycle</keyword>
<keyword id="KW-0175">Coiled coil</keyword>
<keyword id="KW-0963">Cytoplasm</keyword>
<keyword id="KW-0235">DNA replication</keyword>
<keyword id="KW-1017">Isopeptide bond</keyword>
<keyword id="KW-0539">Nucleus</keyword>
<keyword id="KW-0597">Phosphoprotein</keyword>
<keyword id="KW-0653">Protein transport</keyword>
<keyword id="KW-1267">Proteomics identification</keyword>
<keyword id="KW-1185">Reference proteome</keyword>
<keyword id="KW-0677">Repeat</keyword>
<keyword id="KW-0802">TPR repeat</keyword>
<keyword id="KW-0813">Transport</keyword>
<keyword id="KW-0832">Ubl conjugation</keyword>
<proteinExistence type="evidence at protein level"/>